<organism>
    <name type="scientific">Clavibacter sepedonicus</name>
    <name type="common">Clavibacter michiganensis subsp. sepedonicus</name>
    <dbReference type="NCBI Taxonomy" id="31964"/>
    <lineage>
        <taxon>Bacteria</taxon>
        <taxon>Bacillati</taxon>
        <taxon>Actinomycetota</taxon>
        <taxon>Actinomycetes</taxon>
        <taxon>Micrococcales</taxon>
        <taxon>Microbacteriaceae</taxon>
        <taxon>Clavibacter</taxon>
    </lineage>
</organism>
<proteinExistence type="inferred from homology"/>
<protein>
    <recommendedName>
        <fullName evidence="1">Phosphoglycerate kinase</fullName>
        <ecNumber evidence="1">2.7.2.3</ecNumber>
    </recommendedName>
</protein>
<feature type="chain" id="PRO_1000076583" description="Phosphoglycerate kinase">
    <location>
        <begin position="1"/>
        <end position="404"/>
    </location>
</feature>
<feature type="binding site" evidence="1">
    <location>
        <begin position="22"/>
        <end position="24"/>
    </location>
    <ligand>
        <name>substrate</name>
    </ligand>
</feature>
<feature type="binding site" evidence="1">
    <location>
        <position position="37"/>
    </location>
    <ligand>
        <name>substrate</name>
    </ligand>
</feature>
<feature type="binding site" evidence="1">
    <location>
        <begin position="60"/>
        <end position="63"/>
    </location>
    <ligand>
        <name>substrate</name>
    </ligand>
</feature>
<feature type="binding site" evidence="1">
    <location>
        <position position="119"/>
    </location>
    <ligand>
        <name>substrate</name>
    </ligand>
</feature>
<feature type="binding site" evidence="1">
    <location>
        <position position="156"/>
    </location>
    <ligand>
        <name>substrate</name>
    </ligand>
</feature>
<feature type="binding site" evidence="1">
    <location>
        <position position="206"/>
    </location>
    <ligand>
        <name>ATP</name>
        <dbReference type="ChEBI" id="CHEBI:30616"/>
    </ligand>
</feature>
<feature type="binding site" evidence="1">
    <location>
        <position position="302"/>
    </location>
    <ligand>
        <name>ATP</name>
        <dbReference type="ChEBI" id="CHEBI:30616"/>
    </ligand>
</feature>
<feature type="binding site" evidence="1">
    <location>
        <position position="333"/>
    </location>
    <ligand>
        <name>ATP</name>
        <dbReference type="ChEBI" id="CHEBI:30616"/>
    </ligand>
</feature>
<feature type="binding site" evidence="1">
    <location>
        <begin position="359"/>
        <end position="362"/>
    </location>
    <ligand>
        <name>ATP</name>
        <dbReference type="ChEBI" id="CHEBI:30616"/>
    </ligand>
</feature>
<gene>
    <name evidence="1" type="primary">pgk</name>
    <name type="ordered locus">CMS1987</name>
</gene>
<name>PGK_CLASE</name>
<sequence>MALRTIDSLGDLRGRRVIVRCDLNVPLKGGVIGDDGRIRASLGTLTGLREAGARVIVISHLGRPDGTPDEKYSLRPVAARLGELLRADVAFADDTVGDSARAAVEALGDGDVVVLENLRFHAEETSKDETVRRGFAESIAELGDAFVSDGFGVVHRKQASVFELAQALPSAAGSLIASELEVLDRLTENPERPYTVVLGGSKVSDKLGVIGHLLPRVDSLLIGGGMLFTFLKAQGHEVGASLLEEDQVETVKGYLAEAEERGVKIVLPTDVVVADGFSADAAHEVTRADAIEGTPAGAKGLGLDIGPETADAFATIIRGSTTVFWNGPMGVFELEPFAAGTKTVADALTRVEGLSVVGGGDSAAAVRALGFDDDRFGHISTGGGASLEFLEGKRLPGLEVLGWQ</sequence>
<keyword id="KW-0067">ATP-binding</keyword>
<keyword id="KW-0963">Cytoplasm</keyword>
<keyword id="KW-0324">Glycolysis</keyword>
<keyword id="KW-0418">Kinase</keyword>
<keyword id="KW-0547">Nucleotide-binding</keyword>
<keyword id="KW-0808">Transferase</keyword>
<evidence type="ECO:0000255" key="1">
    <source>
        <dbReference type="HAMAP-Rule" id="MF_00145"/>
    </source>
</evidence>
<accession>B0REJ2</accession>
<reference key="1">
    <citation type="journal article" date="2008" name="J. Bacteriol.">
        <title>Genome of the actinomycete plant pathogen Clavibacter michiganensis subsp. sepedonicus suggests recent niche adaptation.</title>
        <authorList>
            <person name="Bentley S.D."/>
            <person name="Corton C."/>
            <person name="Brown S.E."/>
            <person name="Barron A."/>
            <person name="Clark L."/>
            <person name="Doggett J."/>
            <person name="Harris B."/>
            <person name="Ormond D."/>
            <person name="Quail M.A."/>
            <person name="May G."/>
            <person name="Francis D."/>
            <person name="Knudson D."/>
            <person name="Parkhill J."/>
            <person name="Ishimaru C.A."/>
        </authorList>
    </citation>
    <scope>NUCLEOTIDE SEQUENCE [LARGE SCALE GENOMIC DNA]</scope>
    <source>
        <strain>ATCC 33113 / DSM 20744 / JCM 9667 / LMG 2889 / ICMP 2535 / C-1</strain>
    </source>
</reference>
<dbReference type="EC" id="2.7.2.3" evidence="1"/>
<dbReference type="EMBL" id="AM849034">
    <property type="protein sequence ID" value="CAQ02084.1"/>
    <property type="molecule type" value="Genomic_DNA"/>
</dbReference>
<dbReference type="RefSeq" id="WP_012299315.1">
    <property type="nucleotide sequence ID" value="NZ_MZMN01000003.1"/>
</dbReference>
<dbReference type="SMR" id="B0REJ2"/>
<dbReference type="STRING" id="31964.CMS1987"/>
<dbReference type="KEGG" id="cms:CMS1987"/>
<dbReference type="eggNOG" id="COG0126">
    <property type="taxonomic scope" value="Bacteria"/>
</dbReference>
<dbReference type="HOGENOM" id="CLU_025427_0_2_11"/>
<dbReference type="OrthoDB" id="9808460at2"/>
<dbReference type="UniPathway" id="UPA00109">
    <property type="reaction ID" value="UER00185"/>
</dbReference>
<dbReference type="Proteomes" id="UP000001318">
    <property type="component" value="Chromosome"/>
</dbReference>
<dbReference type="GO" id="GO:0005829">
    <property type="term" value="C:cytosol"/>
    <property type="evidence" value="ECO:0007669"/>
    <property type="project" value="TreeGrafter"/>
</dbReference>
<dbReference type="GO" id="GO:0043531">
    <property type="term" value="F:ADP binding"/>
    <property type="evidence" value="ECO:0007669"/>
    <property type="project" value="TreeGrafter"/>
</dbReference>
<dbReference type="GO" id="GO:0005524">
    <property type="term" value="F:ATP binding"/>
    <property type="evidence" value="ECO:0007669"/>
    <property type="project" value="UniProtKB-KW"/>
</dbReference>
<dbReference type="GO" id="GO:0004618">
    <property type="term" value="F:phosphoglycerate kinase activity"/>
    <property type="evidence" value="ECO:0007669"/>
    <property type="project" value="UniProtKB-UniRule"/>
</dbReference>
<dbReference type="GO" id="GO:0006094">
    <property type="term" value="P:gluconeogenesis"/>
    <property type="evidence" value="ECO:0007669"/>
    <property type="project" value="TreeGrafter"/>
</dbReference>
<dbReference type="GO" id="GO:0006096">
    <property type="term" value="P:glycolytic process"/>
    <property type="evidence" value="ECO:0007669"/>
    <property type="project" value="UniProtKB-UniRule"/>
</dbReference>
<dbReference type="FunFam" id="3.40.50.1260:FF:000006">
    <property type="entry name" value="Phosphoglycerate kinase"/>
    <property type="match status" value="1"/>
</dbReference>
<dbReference type="FunFam" id="3.40.50.1260:FF:000031">
    <property type="entry name" value="Phosphoglycerate kinase 1"/>
    <property type="match status" value="1"/>
</dbReference>
<dbReference type="Gene3D" id="3.40.50.1260">
    <property type="entry name" value="Phosphoglycerate kinase, N-terminal domain"/>
    <property type="match status" value="2"/>
</dbReference>
<dbReference type="HAMAP" id="MF_00145">
    <property type="entry name" value="Phosphoglyc_kinase"/>
    <property type="match status" value="1"/>
</dbReference>
<dbReference type="InterPro" id="IPR001576">
    <property type="entry name" value="Phosphoglycerate_kinase"/>
</dbReference>
<dbReference type="InterPro" id="IPR015911">
    <property type="entry name" value="Phosphoglycerate_kinase_CS"/>
</dbReference>
<dbReference type="InterPro" id="IPR015824">
    <property type="entry name" value="Phosphoglycerate_kinase_N"/>
</dbReference>
<dbReference type="InterPro" id="IPR036043">
    <property type="entry name" value="Phosphoglycerate_kinase_sf"/>
</dbReference>
<dbReference type="PANTHER" id="PTHR11406">
    <property type="entry name" value="PHOSPHOGLYCERATE KINASE"/>
    <property type="match status" value="1"/>
</dbReference>
<dbReference type="PANTHER" id="PTHR11406:SF23">
    <property type="entry name" value="PHOSPHOGLYCERATE KINASE 1, CHLOROPLASTIC-RELATED"/>
    <property type="match status" value="1"/>
</dbReference>
<dbReference type="Pfam" id="PF00162">
    <property type="entry name" value="PGK"/>
    <property type="match status" value="1"/>
</dbReference>
<dbReference type="PIRSF" id="PIRSF000724">
    <property type="entry name" value="Pgk"/>
    <property type="match status" value="1"/>
</dbReference>
<dbReference type="PRINTS" id="PR00477">
    <property type="entry name" value="PHGLYCKINASE"/>
</dbReference>
<dbReference type="SUPFAM" id="SSF53748">
    <property type="entry name" value="Phosphoglycerate kinase"/>
    <property type="match status" value="1"/>
</dbReference>
<dbReference type="PROSITE" id="PS00111">
    <property type="entry name" value="PGLYCERATE_KINASE"/>
    <property type="match status" value="1"/>
</dbReference>
<comment type="catalytic activity">
    <reaction evidence="1">
        <text>(2R)-3-phosphoglycerate + ATP = (2R)-3-phospho-glyceroyl phosphate + ADP</text>
        <dbReference type="Rhea" id="RHEA:14801"/>
        <dbReference type="ChEBI" id="CHEBI:30616"/>
        <dbReference type="ChEBI" id="CHEBI:57604"/>
        <dbReference type="ChEBI" id="CHEBI:58272"/>
        <dbReference type="ChEBI" id="CHEBI:456216"/>
        <dbReference type="EC" id="2.7.2.3"/>
    </reaction>
</comment>
<comment type="pathway">
    <text evidence="1">Carbohydrate degradation; glycolysis; pyruvate from D-glyceraldehyde 3-phosphate: step 2/5.</text>
</comment>
<comment type="subunit">
    <text evidence="1">Monomer.</text>
</comment>
<comment type="subcellular location">
    <subcellularLocation>
        <location evidence="1">Cytoplasm</location>
    </subcellularLocation>
</comment>
<comment type="similarity">
    <text evidence="1">Belongs to the phosphoglycerate kinase family.</text>
</comment>